<proteinExistence type="inferred from homology"/>
<organism>
    <name type="scientific">Bacillus cereus (strain ATCC 10987 / NRS 248)</name>
    <dbReference type="NCBI Taxonomy" id="222523"/>
    <lineage>
        <taxon>Bacteria</taxon>
        <taxon>Bacillati</taxon>
        <taxon>Bacillota</taxon>
        <taxon>Bacilli</taxon>
        <taxon>Bacillales</taxon>
        <taxon>Bacillaceae</taxon>
        <taxon>Bacillus</taxon>
        <taxon>Bacillus cereus group</taxon>
    </lineage>
</organism>
<dbReference type="EC" id="4.1.1.37" evidence="1"/>
<dbReference type="EMBL" id="AE017194">
    <property type="protein sequence ID" value="AAS40097.1"/>
    <property type="molecule type" value="Genomic_DNA"/>
</dbReference>
<dbReference type="SMR" id="Q73C99"/>
<dbReference type="KEGG" id="bca:BCE_1167"/>
<dbReference type="HOGENOM" id="CLU_040933_0_1_9"/>
<dbReference type="UniPathway" id="UPA00251">
    <property type="reaction ID" value="UER00321"/>
</dbReference>
<dbReference type="Proteomes" id="UP000002527">
    <property type="component" value="Chromosome"/>
</dbReference>
<dbReference type="GO" id="GO:0005829">
    <property type="term" value="C:cytosol"/>
    <property type="evidence" value="ECO:0007669"/>
    <property type="project" value="TreeGrafter"/>
</dbReference>
<dbReference type="GO" id="GO:0004853">
    <property type="term" value="F:uroporphyrinogen decarboxylase activity"/>
    <property type="evidence" value="ECO:0007669"/>
    <property type="project" value="UniProtKB-UniRule"/>
</dbReference>
<dbReference type="GO" id="GO:0006782">
    <property type="term" value="P:protoporphyrinogen IX biosynthetic process"/>
    <property type="evidence" value="ECO:0007669"/>
    <property type="project" value="UniProtKB-UniRule"/>
</dbReference>
<dbReference type="CDD" id="cd00717">
    <property type="entry name" value="URO-D"/>
    <property type="match status" value="1"/>
</dbReference>
<dbReference type="FunFam" id="3.20.20.210:FF:000005">
    <property type="entry name" value="Uroporphyrinogen decarboxylase"/>
    <property type="match status" value="1"/>
</dbReference>
<dbReference type="Gene3D" id="3.20.20.210">
    <property type="match status" value="1"/>
</dbReference>
<dbReference type="HAMAP" id="MF_00218">
    <property type="entry name" value="URO_D"/>
    <property type="match status" value="1"/>
</dbReference>
<dbReference type="InterPro" id="IPR038071">
    <property type="entry name" value="UROD/MetE-like_sf"/>
</dbReference>
<dbReference type="InterPro" id="IPR006361">
    <property type="entry name" value="Uroporphyrinogen_deCO2ase_HemE"/>
</dbReference>
<dbReference type="InterPro" id="IPR000257">
    <property type="entry name" value="Uroporphyrinogen_deCOase"/>
</dbReference>
<dbReference type="NCBIfam" id="TIGR01464">
    <property type="entry name" value="hemE"/>
    <property type="match status" value="1"/>
</dbReference>
<dbReference type="PANTHER" id="PTHR21091">
    <property type="entry name" value="METHYLTETRAHYDROFOLATE:HOMOCYSTEINE METHYLTRANSFERASE RELATED"/>
    <property type="match status" value="1"/>
</dbReference>
<dbReference type="PANTHER" id="PTHR21091:SF169">
    <property type="entry name" value="UROPORPHYRINOGEN DECARBOXYLASE"/>
    <property type="match status" value="1"/>
</dbReference>
<dbReference type="Pfam" id="PF01208">
    <property type="entry name" value="URO-D"/>
    <property type="match status" value="1"/>
</dbReference>
<dbReference type="SUPFAM" id="SSF51726">
    <property type="entry name" value="UROD/MetE-like"/>
    <property type="match status" value="1"/>
</dbReference>
<dbReference type="PROSITE" id="PS00906">
    <property type="entry name" value="UROD_1"/>
    <property type="match status" value="1"/>
</dbReference>
<dbReference type="PROSITE" id="PS00907">
    <property type="entry name" value="UROD_2"/>
    <property type="match status" value="1"/>
</dbReference>
<protein>
    <recommendedName>
        <fullName evidence="1">Uroporphyrinogen decarboxylase</fullName>
        <shortName evidence="1">UPD</shortName>
        <shortName evidence="1">URO-D</shortName>
        <ecNumber evidence="1">4.1.1.37</ecNumber>
    </recommendedName>
</protein>
<gene>
    <name evidence="1" type="primary">hemE</name>
    <name type="ordered locus">BCE_1167</name>
</gene>
<sequence>MVRTINETFLKACRGERTDYVPAWYMRQAGRSQPEYRKIKEKYSLFEITHNPELCAYVTKLPVDQYNVDAAILYKDIMSPLPAIGVDVEIKSGIGPVIDNPIRSLQDVEKLGEINPEDDVPYILDTIRLLTTEMLDVPLIGFSGAPFTLASYMIEGGPSRNYHNTKAFMYAEPKAWFALMDKLADMVITYLKAQINAGAKAVQIFDSWVGTVNVADYRVFIKPAMERIFAEVRTMGVPMIMHGVGAAHLVNEWHDLPLDVVGLDWRLPIEEARARGVHKAVQGNMDPSFLLAPWSVIEEHVKGILDQGMKQPGYIFNLGHGVFPEVNPDTLKRLTTFIHEYSKGQLAK</sequence>
<name>DCUP_BACC1</name>
<feature type="chain" id="PRO_1000023873" description="Uroporphyrinogen decarboxylase">
    <location>
        <begin position="1"/>
        <end position="348"/>
    </location>
</feature>
<feature type="binding site" evidence="1">
    <location>
        <begin position="27"/>
        <end position="31"/>
    </location>
    <ligand>
        <name>substrate</name>
    </ligand>
</feature>
<feature type="binding site" evidence="1">
    <location>
        <position position="46"/>
    </location>
    <ligand>
        <name>substrate</name>
    </ligand>
</feature>
<feature type="binding site" evidence="1">
    <location>
        <position position="76"/>
    </location>
    <ligand>
        <name>substrate</name>
    </ligand>
</feature>
<feature type="binding site" evidence="1">
    <location>
        <position position="152"/>
    </location>
    <ligand>
        <name>substrate</name>
    </ligand>
</feature>
<feature type="binding site" evidence="1">
    <location>
        <position position="207"/>
    </location>
    <ligand>
        <name>substrate</name>
    </ligand>
</feature>
<feature type="binding site" evidence="1">
    <location>
        <position position="320"/>
    </location>
    <ligand>
        <name>substrate</name>
    </ligand>
</feature>
<feature type="site" description="Transition state stabilizer" evidence="1">
    <location>
        <position position="76"/>
    </location>
</feature>
<comment type="function">
    <text evidence="1">Catalyzes the decarboxylation of four acetate groups of uroporphyrinogen-III to yield coproporphyrinogen-III.</text>
</comment>
<comment type="catalytic activity">
    <reaction evidence="1">
        <text>uroporphyrinogen III + 4 H(+) = coproporphyrinogen III + 4 CO2</text>
        <dbReference type="Rhea" id="RHEA:19865"/>
        <dbReference type="ChEBI" id="CHEBI:15378"/>
        <dbReference type="ChEBI" id="CHEBI:16526"/>
        <dbReference type="ChEBI" id="CHEBI:57308"/>
        <dbReference type="ChEBI" id="CHEBI:57309"/>
        <dbReference type="EC" id="4.1.1.37"/>
    </reaction>
</comment>
<comment type="pathway">
    <text evidence="1">Porphyrin-containing compound metabolism; protoporphyrin-IX biosynthesis; coproporphyrinogen-III from 5-aminolevulinate: step 4/4.</text>
</comment>
<comment type="subunit">
    <text evidence="1">Homodimer.</text>
</comment>
<comment type="subcellular location">
    <subcellularLocation>
        <location evidence="1">Cytoplasm</location>
    </subcellularLocation>
</comment>
<comment type="similarity">
    <text evidence="1">Belongs to the uroporphyrinogen decarboxylase family.</text>
</comment>
<keyword id="KW-0963">Cytoplasm</keyword>
<keyword id="KW-0210">Decarboxylase</keyword>
<keyword id="KW-0456">Lyase</keyword>
<keyword id="KW-0627">Porphyrin biosynthesis</keyword>
<evidence type="ECO:0000255" key="1">
    <source>
        <dbReference type="HAMAP-Rule" id="MF_00218"/>
    </source>
</evidence>
<reference key="1">
    <citation type="journal article" date="2004" name="Nucleic Acids Res.">
        <title>The genome sequence of Bacillus cereus ATCC 10987 reveals metabolic adaptations and a large plasmid related to Bacillus anthracis pXO1.</title>
        <authorList>
            <person name="Rasko D.A."/>
            <person name="Ravel J."/>
            <person name="Oekstad O.A."/>
            <person name="Helgason E."/>
            <person name="Cer R.Z."/>
            <person name="Jiang L."/>
            <person name="Shores K.A."/>
            <person name="Fouts D.E."/>
            <person name="Tourasse N.J."/>
            <person name="Angiuoli S.V."/>
            <person name="Kolonay J.F."/>
            <person name="Nelson W.C."/>
            <person name="Kolstoe A.-B."/>
            <person name="Fraser C.M."/>
            <person name="Read T.D."/>
        </authorList>
    </citation>
    <scope>NUCLEOTIDE SEQUENCE [LARGE SCALE GENOMIC DNA]</scope>
    <source>
        <strain>ATCC 10987 / NRS 248</strain>
    </source>
</reference>
<accession>Q73C99</accession>